<organism>
    <name type="scientific">Wolbachia pipientis wMel</name>
    <dbReference type="NCBI Taxonomy" id="163164"/>
    <lineage>
        <taxon>Bacteria</taxon>
        <taxon>Pseudomonadati</taxon>
        <taxon>Pseudomonadota</taxon>
        <taxon>Alphaproteobacteria</taxon>
        <taxon>Rickettsiales</taxon>
        <taxon>Anaplasmataceae</taxon>
        <taxon>Wolbachieae</taxon>
        <taxon>Wolbachia</taxon>
    </lineage>
</organism>
<accession>Q73IL4</accession>
<evidence type="ECO:0000255" key="1">
    <source>
        <dbReference type="HAMAP-Rule" id="MF_00651"/>
    </source>
</evidence>
<comment type="function">
    <text evidence="1">Could be a nuclease involved in processing of the 5'-end of pre-16S rRNA.</text>
</comment>
<comment type="subcellular location">
    <subcellularLocation>
        <location evidence="1">Cytoplasm</location>
    </subcellularLocation>
</comment>
<comment type="similarity">
    <text evidence="1">Belongs to the YqgF nuclease family.</text>
</comment>
<name>YQGF_WOLPM</name>
<keyword id="KW-0963">Cytoplasm</keyword>
<keyword id="KW-0378">Hydrolase</keyword>
<keyword id="KW-0540">Nuclease</keyword>
<keyword id="KW-0690">Ribosome biogenesis</keyword>
<gene>
    <name type="ordered locus">WD_0143</name>
</gene>
<dbReference type="EC" id="3.1.-.-" evidence="1"/>
<dbReference type="EMBL" id="AE017196">
    <property type="protein sequence ID" value="AAS13897.1"/>
    <property type="molecule type" value="Genomic_DNA"/>
</dbReference>
<dbReference type="SMR" id="Q73IL4"/>
<dbReference type="EnsemblBacteria" id="AAS13897">
    <property type="protein sequence ID" value="AAS13897"/>
    <property type="gene ID" value="WD_0143"/>
</dbReference>
<dbReference type="KEGG" id="wol:WD_0143"/>
<dbReference type="eggNOG" id="COG0816">
    <property type="taxonomic scope" value="Bacteria"/>
</dbReference>
<dbReference type="Proteomes" id="UP000008215">
    <property type="component" value="Chromosome"/>
</dbReference>
<dbReference type="GO" id="GO:0005829">
    <property type="term" value="C:cytosol"/>
    <property type="evidence" value="ECO:0007669"/>
    <property type="project" value="TreeGrafter"/>
</dbReference>
<dbReference type="GO" id="GO:0004518">
    <property type="term" value="F:nuclease activity"/>
    <property type="evidence" value="ECO:0007669"/>
    <property type="project" value="UniProtKB-KW"/>
</dbReference>
<dbReference type="GO" id="GO:0000967">
    <property type="term" value="P:rRNA 5'-end processing"/>
    <property type="evidence" value="ECO:0007669"/>
    <property type="project" value="UniProtKB-UniRule"/>
</dbReference>
<dbReference type="CDD" id="cd16964">
    <property type="entry name" value="YqgF"/>
    <property type="match status" value="1"/>
</dbReference>
<dbReference type="Gene3D" id="3.30.420.140">
    <property type="entry name" value="YqgF/RNase H-like domain"/>
    <property type="match status" value="1"/>
</dbReference>
<dbReference type="HAMAP" id="MF_00651">
    <property type="entry name" value="Nuclease_YqgF"/>
    <property type="match status" value="1"/>
</dbReference>
<dbReference type="InterPro" id="IPR012337">
    <property type="entry name" value="RNaseH-like_sf"/>
</dbReference>
<dbReference type="InterPro" id="IPR005227">
    <property type="entry name" value="YqgF"/>
</dbReference>
<dbReference type="InterPro" id="IPR006641">
    <property type="entry name" value="YqgF/RNaseH-like_dom"/>
</dbReference>
<dbReference type="InterPro" id="IPR037027">
    <property type="entry name" value="YqgF/RNaseH-like_dom_sf"/>
</dbReference>
<dbReference type="NCBIfam" id="TIGR00250">
    <property type="entry name" value="RNAse_H_YqgF"/>
    <property type="match status" value="1"/>
</dbReference>
<dbReference type="PANTHER" id="PTHR33317">
    <property type="entry name" value="POLYNUCLEOTIDYL TRANSFERASE, RIBONUCLEASE H-LIKE SUPERFAMILY PROTEIN"/>
    <property type="match status" value="1"/>
</dbReference>
<dbReference type="PANTHER" id="PTHR33317:SF4">
    <property type="entry name" value="POLYNUCLEOTIDYL TRANSFERASE, RIBONUCLEASE H-LIKE SUPERFAMILY PROTEIN"/>
    <property type="match status" value="1"/>
</dbReference>
<dbReference type="Pfam" id="PF03652">
    <property type="entry name" value="RuvX"/>
    <property type="match status" value="1"/>
</dbReference>
<dbReference type="SMART" id="SM00732">
    <property type="entry name" value="YqgFc"/>
    <property type="match status" value="1"/>
</dbReference>
<dbReference type="SUPFAM" id="SSF53098">
    <property type="entry name" value="Ribonuclease H-like"/>
    <property type="match status" value="1"/>
</dbReference>
<protein>
    <recommendedName>
        <fullName evidence="1">Putative pre-16S rRNA nuclease</fullName>
        <ecNumber evidence="1">3.1.-.-</ecNumber>
    </recommendedName>
</protein>
<reference key="1">
    <citation type="journal article" date="2004" name="PLoS Biol.">
        <title>Phylogenomics of the reproductive parasite Wolbachia pipientis wMel: a streamlined genome overrun by mobile genetic elements.</title>
        <authorList>
            <person name="Wu M."/>
            <person name="Sun L.V."/>
            <person name="Vamathevan J.J."/>
            <person name="Riegler M."/>
            <person name="DeBoy R.T."/>
            <person name="Brownlie J.C."/>
            <person name="McGraw E.A."/>
            <person name="Martin W."/>
            <person name="Esser C."/>
            <person name="Ahmadinejad N."/>
            <person name="Wiegand C."/>
            <person name="Madupu R."/>
            <person name="Beanan M.J."/>
            <person name="Brinkac L.M."/>
            <person name="Daugherty S.C."/>
            <person name="Durkin A.S."/>
            <person name="Kolonay J.F."/>
            <person name="Nelson W.C."/>
            <person name="Mohamoud Y."/>
            <person name="Lee P."/>
            <person name="Berry K.J."/>
            <person name="Young M.B."/>
            <person name="Utterback T.R."/>
            <person name="Weidman J.F."/>
            <person name="Nierman W.C."/>
            <person name="Paulsen I.T."/>
            <person name="Nelson K.E."/>
            <person name="Tettelin H."/>
            <person name="O'Neill S.L."/>
            <person name="Eisen J.A."/>
        </authorList>
    </citation>
    <scope>NUCLEOTIDE SEQUENCE [LARGE SCALE GENOMIC DNA]</scope>
</reference>
<proteinExistence type="inferred from homology"/>
<sequence length="155" mass="17860">MLHRNPDEFLKSIPKDKRIMCLDMGEKQIGIAFSDKTQLIATAHSIYHRKNMSKDLGYLHRIFKENESGSMVIGLPLKMDEQETKWCKTIIQFANKIIKKYKVNIYLQDESFSTSIATHTLKITGISITKSKKIDDKISACIILQRTLDKINTIK</sequence>
<feature type="chain" id="PRO_0000172175" description="Putative pre-16S rRNA nuclease">
    <location>
        <begin position="1"/>
        <end position="155"/>
    </location>
</feature>